<sequence length="198" mass="21828">MYDYIKGQLTKITAKYIVVEANGLGYMINVANPYSFTDSVNQLVTIYLHQVIREDAHLLFGFHTKDEKDVFLKLISVSGIGPTTALAIVAVDDNEGLVNAIDNSDIKYLMKFPKIGKKTAQQMVLDLAGKFVEAPQETGNTKARSNKAGNTQLDEAIEALLALGYKATELKKIRAFFEGTSETAEQYIKSALKLLMKG</sequence>
<reference key="1">
    <citation type="journal article" date="2002" name="Proc. Natl. Acad. Sci. U.S.A.">
        <title>Genome sequence and comparative microarray analysis of serotype M18 group A Streptococcus strains associated with acute rheumatic fever outbreaks.</title>
        <authorList>
            <person name="Smoot J.C."/>
            <person name="Barbian K.D."/>
            <person name="Van Gompel J.J."/>
            <person name="Smoot L.M."/>
            <person name="Chaussee M.S."/>
            <person name="Sylva G.L."/>
            <person name="Sturdevant D.E."/>
            <person name="Ricklefs S.M."/>
            <person name="Porcella S.F."/>
            <person name="Parkins L.D."/>
            <person name="Beres S.B."/>
            <person name="Campbell D.S."/>
            <person name="Smith T.M."/>
            <person name="Zhang Q."/>
            <person name="Kapur V."/>
            <person name="Daly J.A."/>
            <person name="Veasy L.G."/>
            <person name="Musser J.M."/>
        </authorList>
    </citation>
    <scope>NUCLEOTIDE SEQUENCE [LARGE SCALE GENOMIC DNA]</scope>
    <source>
        <strain>MGAS8232</strain>
    </source>
</reference>
<comment type="function">
    <text evidence="1">The RuvA-RuvB-RuvC complex processes Holliday junction (HJ) DNA during genetic recombination and DNA repair, while the RuvA-RuvB complex plays an important role in the rescue of blocked DNA replication forks via replication fork reversal (RFR). RuvA specifically binds to HJ cruciform DNA, conferring on it an open structure. The RuvB hexamer acts as an ATP-dependent pump, pulling dsDNA into and through the RuvAB complex. HJ branch migration allows RuvC to scan DNA until it finds its consensus sequence, where it cleaves and resolves the cruciform DNA.</text>
</comment>
<comment type="subunit">
    <text evidence="1">Homotetramer. Forms an RuvA(8)-RuvB(12)-Holliday junction (HJ) complex. HJ DNA is sandwiched between 2 RuvA tetramers; dsDNA enters through RuvA and exits via RuvB. An RuvB hexamer assembles on each DNA strand where it exits the tetramer. Each RuvB hexamer is contacted by two RuvA subunits (via domain III) on 2 adjacent RuvB subunits; this complex drives branch migration. In the full resolvosome a probable DNA-RuvA(4)-RuvB(12)-RuvC(2) complex forms which resolves the HJ.</text>
</comment>
<comment type="subcellular location">
    <subcellularLocation>
        <location evidence="1">Cytoplasm</location>
    </subcellularLocation>
</comment>
<comment type="domain">
    <text evidence="1">Has three domains with a flexible linker between the domains II and III and assumes an 'L' shape. Domain III is highly mobile and contacts RuvB.</text>
</comment>
<comment type="similarity">
    <text evidence="1">Belongs to the RuvA family.</text>
</comment>
<dbReference type="EMBL" id="AE009949">
    <property type="protein sequence ID" value="AAL98621.1"/>
    <property type="molecule type" value="Genomic_DNA"/>
</dbReference>
<dbReference type="RefSeq" id="WP_011018315.1">
    <property type="nucleotide sequence ID" value="NC_003485.1"/>
</dbReference>
<dbReference type="SMR" id="Q8NZ27"/>
<dbReference type="KEGG" id="spm:spyM18_2177"/>
<dbReference type="HOGENOM" id="CLU_087936_1_0_9"/>
<dbReference type="GO" id="GO:0005737">
    <property type="term" value="C:cytoplasm"/>
    <property type="evidence" value="ECO:0007669"/>
    <property type="project" value="UniProtKB-SubCell"/>
</dbReference>
<dbReference type="GO" id="GO:0009379">
    <property type="term" value="C:Holliday junction helicase complex"/>
    <property type="evidence" value="ECO:0007669"/>
    <property type="project" value="InterPro"/>
</dbReference>
<dbReference type="GO" id="GO:0048476">
    <property type="term" value="C:Holliday junction resolvase complex"/>
    <property type="evidence" value="ECO:0007669"/>
    <property type="project" value="UniProtKB-UniRule"/>
</dbReference>
<dbReference type="GO" id="GO:0005524">
    <property type="term" value="F:ATP binding"/>
    <property type="evidence" value="ECO:0007669"/>
    <property type="project" value="InterPro"/>
</dbReference>
<dbReference type="GO" id="GO:0000400">
    <property type="term" value="F:four-way junction DNA binding"/>
    <property type="evidence" value="ECO:0007669"/>
    <property type="project" value="UniProtKB-UniRule"/>
</dbReference>
<dbReference type="GO" id="GO:0009378">
    <property type="term" value="F:four-way junction helicase activity"/>
    <property type="evidence" value="ECO:0007669"/>
    <property type="project" value="InterPro"/>
</dbReference>
<dbReference type="GO" id="GO:0006310">
    <property type="term" value="P:DNA recombination"/>
    <property type="evidence" value="ECO:0007669"/>
    <property type="project" value="UniProtKB-UniRule"/>
</dbReference>
<dbReference type="GO" id="GO:0006281">
    <property type="term" value="P:DNA repair"/>
    <property type="evidence" value="ECO:0007669"/>
    <property type="project" value="UniProtKB-UniRule"/>
</dbReference>
<dbReference type="CDD" id="cd14332">
    <property type="entry name" value="UBA_RuvA_C"/>
    <property type="match status" value="1"/>
</dbReference>
<dbReference type="Gene3D" id="1.10.150.20">
    <property type="entry name" value="5' to 3' exonuclease, C-terminal subdomain"/>
    <property type="match status" value="1"/>
</dbReference>
<dbReference type="Gene3D" id="1.10.8.10">
    <property type="entry name" value="DNA helicase RuvA subunit, C-terminal domain"/>
    <property type="match status" value="1"/>
</dbReference>
<dbReference type="Gene3D" id="2.40.50.140">
    <property type="entry name" value="Nucleic acid-binding proteins"/>
    <property type="match status" value="1"/>
</dbReference>
<dbReference type="HAMAP" id="MF_00031">
    <property type="entry name" value="DNA_HJ_migration_RuvA"/>
    <property type="match status" value="1"/>
</dbReference>
<dbReference type="InterPro" id="IPR013849">
    <property type="entry name" value="DNA_helicase_Holl-junc_RuvA_I"/>
</dbReference>
<dbReference type="InterPro" id="IPR003583">
    <property type="entry name" value="Hlx-hairpin-Hlx_DNA-bd_motif"/>
</dbReference>
<dbReference type="InterPro" id="IPR012340">
    <property type="entry name" value="NA-bd_OB-fold"/>
</dbReference>
<dbReference type="InterPro" id="IPR000085">
    <property type="entry name" value="RuvA"/>
</dbReference>
<dbReference type="InterPro" id="IPR010994">
    <property type="entry name" value="RuvA_2-like"/>
</dbReference>
<dbReference type="InterPro" id="IPR011114">
    <property type="entry name" value="RuvA_C"/>
</dbReference>
<dbReference type="InterPro" id="IPR036267">
    <property type="entry name" value="RuvA_C_sf"/>
</dbReference>
<dbReference type="NCBIfam" id="TIGR00084">
    <property type="entry name" value="ruvA"/>
    <property type="match status" value="1"/>
</dbReference>
<dbReference type="Pfam" id="PF14520">
    <property type="entry name" value="HHH_5"/>
    <property type="match status" value="1"/>
</dbReference>
<dbReference type="Pfam" id="PF07499">
    <property type="entry name" value="RuvA_C"/>
    <property type="match status" value="1"/>
</dbReference>
<dbReference type="Pfam" id="PF01330">
    <property type="entry name" value="RuvA_N"/>
    <property type="match status" value="1"/>
</dbReference>
<dbReference type="SMART" id="SM00278">
    <property type="entry name" value="HhH1"/>
    <property type="match status" value="2"/>
</dbReference>
<dbReference type="SUPFAM" id="SSF46929">
    <property type="entry name" value="DNA helicase RuvA subunit, C-terminal domain"/>
    <property type="match status" value="1"/>
</dbReference>
<dbReference type="SUPFAM" id="SSF50249">
    <property type="entry name" value="Nucleic acid-binding proteins"/>
    <property type="match status" value="1"/>
</dbReference>
<dbReference type="SUPFAM" id="SSF47781">
    <property type="entry name" value="RuvA domain 2-like"/>
    <property type="match status" value="1"/>
</dbReference>
<accession>Q8NZ27</accession>
<proteinExistence type="inferred from homology"/>
<feature type="chain" id="PRO_0000094696" description="Holliday junction branch migration complex subunit RuvA">
    <location>
        <begin position="1"/>
        <end position="198"/>
    </location>
</feature>
<feature type="region of interest" description="Domain I" evidence="1">
    <location>
        <begin position="1"/>
        <end position="63"/>
    </location>
</feature>
<feature type="region of interest" description="Domain II" evidence="1">
    <location>
        <begin position="64"/>
        <end position="142"/>
    </location>
</feature>
<feature type="region of interest" description="Flexible linker" evidence="1">
    <location>
        <begin position="143"/>
        <end position="147"/>
    </location>
</feature>
<feature type="region of interest" description="Domain III" evidence="1">
    <location>
        <begin position="148"/>
        <end position="198"/>
    </location>
</feature>
<evidence type="ECO:0000255" key="1">
    <source>
        <dbReference type="HAMAP-Rule" id="MF_00031"/>
    </source>
</evidence>
<keyword id="KW-0963">Cytoplasm</keyword>
<keyword id="KW-0227">DNA damage</keyword>
<keyword id="KW-0233">DNA recombination</keyword>
<keyword id="KW-0234">DNA repair</keyword>
<keyword id="KW-0238">DNA-binding</keyword>
<protein>
    <recommendedName>
        <fullName evidence="1">Holliday junction branch migration complex subunit RuvA</fullName>
    </recommendedName>
</protein>
<name>RUVA_STRP8</name>
<gene>
    <name evidence="1" type="primary">ruvA</name>
    <name type="ordered locus">spyM18_2177</name>
</gene>
<organism>
    <name type="scientific">Streptococcus pyogenes serotype M18 (strain MGAS8232)</name>
    <dbReference type="NCBI Taxonomy" id="186103"/>
    <lineage>
        <taxon>Bacteria</taxon>
        <taxon>Bacillati</taxon>
        <taxon>Bacillota</taxon>
        <taxon>Bacilli</taxon>
        <taxon>Lactobacillales</taxon>
        <taxon>Streptococcaceae</taxon>
        <taxon>Streptococcus</taxon>
    </lineage>
</organism>